<comment type="function">
    <text evidence="3 5">Together with the penton and the other minor capsid proteins (M1249L, p17), forms a complicated network immediately below the outer capsid shell, stabilizing the whole capsid (PubMed:31624094). Plays an essential role in the formation of infectious virus particles. Especially required for the formation of the capsid vertices (PubMed:17005638). During virion assembly, associates with the membrane and probably mediates the docking of the penton complex to the inner membrane, where it recruits the capsomers to form the penton core (PubMed:31624094).</text>
</comment>
<comment type="subcellular location">
    <subcellularLocation>
        <location evidence="2 4">Virion</location>
    </subcellularLocation>
    <text evidence="4">Localizes in close proximity to the capsid vertices.</text>
</comment>
<comment type="induction">
    <text evidence="2 6">Expressed in the late phase of the viral replicative cycle.</text>
</comment>
<comment type="similarity">
    <text evidence="8">Belongs to the asfivirus p49 structural protein family.</text>
</comment>
<sequence>MYHDYASKLLADYRSDPPLWESDLPRHNRYSDNILNSRYCGNKNGAAPVYNEYTNSPEKAEKGLQLSDLRNFSFMLNPQHKNIGYGDAQDLEPYSSIPKNKLFNHFKNHRPAFSTHTENLIRRNVVRTEKKTFPQVASLKGTQKNCLTQPSSLPSLKNPKNSSVPSTRFSEHTKFFSYEDIPKLKTKGTIKHEQHLGDQMPGQHYNGYIPHKDVYNILCLAHNLPASVEKGIAGRGIPLGNPHVKPNIEQELIKSTSTYTGVPMLGPLPPKDSQHGREYQEFSANRHMLQVANILHSVFANHSIKPQILEDIPVLNAQLTSIKPVSPFLNKAYQTHYMENIVTLVPRFKSIANYSSPIPNYSKRNSGQAEYFDTSKQTISRHNNYIPKYTGGIGDSKLDSTFPKDFNASSVPLTSAEKDHSLRGDNSACCISSISPSL</sequence>
<organismHost>
    <name type="scientific">Ornithodoros</name>
    <name type="common">relapsing fever ticks</name>
    <dbReference type="NCBI Taxonomy" id="6937"/>
</organismHost>
<organismHost>
    <name type="scientific">Sus scrofa</name>
    <name type="common">Pig</name>
    <dbReference type="NCBI Taxonomy" id="9823"/>
</organismHost>
<organism>
    <name type="scientific">African swine fever virus (strain Badajoz 1971 Vero-adapted)</name>
    <name type="common">Ba71V</name>
    <name type="synonym">ASFV</name>
    <dbReference type="NCBI Taxonomy" id="10498"/>
    <lineage>
        <taxon>Viruses</taxon>
        <taxon>Varidnaviria</taxon>
        <taxon>Bamfordvirae</taxon>
        <taxon>Nucleocytoviricota</taxon>
        <taxon>Pokkesviricetes</taxon>
        <taxon>Asfuvirales</taxon>
        <taxon>Asfarviridae</taxon>
        <taxon>Asfivirus</taxon>
        <taxon>African swine fever virus</taxon>
    </lineage>
</organism>
<protein>
    <recommendedName>
        <fullName evidence="7">Minor capsid protein p49</fullName>
        <shortName>p49</shortName>
    </recommendedName>
</protein>
<dbReference type="EMBL" id="U18466">
    <property type="protein sequence ID" value="AAA65305.1"/>
    <property type="molecule type" value="Genomic_DNA"/>
</dbReference>
<dbReference type="RefSeq" id="NP_042769.1">
    <property type="nucleotide sequence ID" value="NC_001659.2"/>
</dbReference>
<dbReference type="GeneID" id="22220305"/>
<dbReference type="KEGG" id="vg:22220305"/>
<dbReference type="Proteomes" id="UP000000624">
    <property type="component" value="Segment"/>
</dbReference>
<dbReference type="GO" id="GO:0044423">
    <property type="term" value="C:virion component"/>
    <property type="evidence" value="ECO:0007669"/>
    <property type="project" value="UniProtKB-KW"/>
</dbReference>
<name>P49_ASFB7</name>
<feature type="chain" id="PRO_0000373410" description="Minor capsid protein p49">
    <location>
        <begin position="1"/>
        <end position="438"/>
    </location>
</feature>
<feature type="region of interest" description="Disordered" evidence="1">
    <location>
        <begin position="145"/>
        <end position="167"/>
    </location>
</feature>
<accession>Q65165</accession>
<proteinExistence type="evidence at protein level"/>
<keyword id="KW-0426">Late protein</keyword>
<keyword id="KW-1185">Reference proteome</keyword>
<keyword id="KW-0946">Virion</keyword>
<evidence type="ECO:0000256" key="1">
    <source>
        <dbReference type="SAM" id="MobiDB-lite"/>
    </source>
</evidence>
<evidence type="ECO:0000269" key="2">
    <source>
    </source>
</evidence>
<evidence type="ECO:0000269" key="3">
    <source>
    </source>
</evidence>
<evidence type="ECO:0000269" key="4">
    <source>
    </source>
</evidence>
<evidence type="ECO:0000269" key="5">
    <source>
    </source>
</evidence>
<evidence type="ECO:0000269" key="6">
    <source>
    </source>
</evidence>
<evidence type="ECO:0000303" key="7">
    <source>
    </source>
</evidence>
<evidence type="ECO:0000305" key="8"/>
<reference key="1">
    <citation type="journal article" date="1995" name="Virology">
        <title>Analysis of the complete nucleotide sequence of African swine fever virus.</title>
        <authorList>
            <person name="Yanez R.J."/>
            <person name="Rodriguez J.M."/>
            <person name="Nogal M.L."/>
            <person name="Yuste L."/>
            <person name="Enriquez C."/>
            <person name="Rodriguez J.F."/>
            <person name="Vinuela E."/>
        </authorList>
    </citation>
    <scope>NUCLEOTIDE SEQUENCE [LARGE SCALE GENOMIC DNA]</scope>
</reference>
<reference key="2">
    <citation type="journal article" date="2000" name="J. Gen. Virol.">
        <title>Characterization of the african swine fever virus protein p49: a new late structural polypeptide.</title>
        <authorList>
            <person name="Galindo I."/>
            <person name="Vinuela E."/>
            <person name="Carrascosa A.L."/>
        </authorList>
    </citation>
    <scope>CHARACTERIZATION</scope>
    <scope>SUBCELLULAR LOCATION</scope>
    <scope>INDUCTION</scope>
</reference>
<reference key="3">
    <citation type="journal article" date="2006" name="J. Virol.">
        <title>Generation of filamentous instead of icosahedral particles by repression of African swine fever virus structural protein pB438L.</title>
        <authorList>
            <person name="Epifano C."/>
            <person name="Krijnse-Locker J."/>
            <person name="Salas M.L."/>
            <person name="Salas J."/>
            <person name="Rodriguez J.M."/>
        </authorList>
    </citation>
    <scope>FUNCTION</scope>
</reference>
<reference key="4">
    <citation type="journal article" date="2018" name="J. Virol.">
        <title>A Proteomic Atlas of the African Swine Fever Virus Particle.</title>
        <authorList>
            <person name="Alejo A."/>
            <person name="Matamoros T."/>
            <person name="Guerra M."/>
            <person name="Andres G."/>
        </authorList>
    </citation>
    <scope>SUBCELLULAR LOCATION</scope>
</reference>
<reference key="5">
    <citation type="journal article" date="2020" name="J. Virol.">
        <title>The African Swine Fever Virus Transcriptome.</title>
        <authorList>
            <person name="Cackett G."/>
            <person name="Matelska D."/>
            <person name="Sykora M."/>
            <person name="Portugal R."/>
            <person name="Malecki M."/>
            <person name="Baehler J."/>
            <person name="Dixon L."/>
            <person name="Werner F."/>
        </authorList>
    </citation>
    <scope>INDUCTION</scope>
</reference>
<reference key="6">
    <citation type="journal article" date="2019" name="Science">
        <title>Architecture of African swine fever virus and implications for viral assembly.</title>
        <authorList>
            <person name="Wang N."/>
            <person name="Zhao D."/>
            <person name="Wang J."/>
            <person name="Zhang Y."/>
            <person name="Wang M."/>
            <person name="Gao Y."/>
            <person name="Li F."/>
            <person name="Wang J."/>
            <person name="Bu Z."/>
            <person name="Rao Z."/>
            <person name="Wang X."/>
        </authorList>
    </citation>
    <scope>STRUCTURE BY ELECTRON MICROSCOPY (4.8 ANGSTROMS) OF THE ASFV CAPSID</scope>
    <scope>FUNCTION</scope>
    <scope>SUBCELLULAR LOCATION</scope>
    <scope>IDENTIFICATION</scope>
</reference>
<gene>
    <name type="ordered locus">Ba71V-075</name>
    <name type="ORF">B438L</name>
</gene>